<feature type="chain" id="PRO_1000190093" description="Glucose-1-phosphate adenylyltransferase">
    <location>
        <begin position="1"/>
        <end position="414"/>
    </location>
</feature>
<feature type="binding site" evidence="1">
    <location>
        <position position="164"/>
    </location>
    <ligand>
        <name>alpha-D-glucose 1-phosphate</name>
        <dbReference type="ChEBI" id="CHEBI:58601"/>
    </ligand>
</feature>
<feature type="binding site" evidence="1">
    <location>
        <begin position="184"/>
        <end position="185"/>
    </location>
    <ligand>
        <name>alpha-D-glucose 1-phosphate</name>
        <dbReference type="ChEBI" id="CHEBI:58601"/>
    </ligand>
</feature>
<feature type="binding site" evidence="1">
    <location>
        <position position="204"/>
    </location>
    <ligand>
        <name>alpha-D-glucose 1-phosphate</name>
        <dbReference type="ChEBI" id="CHEBI:58601"/>
    </ligand>
</feature>
<reference key="1">
    <citation type="journal article" date="2009" name="Genome Res.">
        <title>Complete genome of the cellulolytic thermophile Acidothermus cellulolyticus 11B provides insights into its ecophysiological and evolutionary adaptations.</title>
        <authorList>
            <person name="Barabote R.D."/>
            <person name="Xie G."/>
            <person name="Leu D.H."/>
            <person name="Normand P."/>
            <person name="Necsulea A."/>
            <person name="Daubin V."/>
            <person name="Medigue C."/>
            <person name="Adney W.S."/>
            <person name="Xu X.C."/>
            <person name="Lapidus A."/>
            <person name="Parales R.E."/>
            <person name="Detter C."/>
            <person name="Pujic P."/>
            <person name="Bruce D."/>
            <person name="Lavire C."/>
            <person name="Challacombe J.F."/>
            <person name="Brettin T.S."/>
            <person name="Berry A.M."/>
        </authorList>
    </citation>
    <scope>NUCLEOTIDE SEQUENCE [LARGE SCALE GENOMIC DNA]</scope>
    <source>
        <strain>ATCC 43068 / DSM 8971 / 11B</strain>
    </source>
</reference>
<accession>A0LVY3</accession>
<protein>
    <recommendedName>
        <fullName evidence="1">Glucose-1-phosphate adenylyltransferase</fullName>
        <ecNumber evidence="1">2.7.7.27</ecNumber>
    </recommendedName>
    <alternativeName>
        <fullName evidence="1">ADP-glucose pyrophosphorylase</fullName>
        <shortName evidence="1">ADPGlc PPase</shortName>
    </alternativeName>
    <alternativeName>
        <fullName evidence="1">ADP-glucose synthase</fullName>
    </alternativeName>
</protein>
<proteinExistence type="inferred from homology"/>
<evidence type="ECO:0000255" key="1">
    <source>
        <dbReference type="HAMAP-Rule" id="MF_00624"/>
    </source>
</evidence>
<sequence>MANRQRVLGIVLAGGQGRRLLPLTADRAKPAVPFGGIYRLIDFVLSNLANAGFLKIVVLTQYKNHSLDRHITTTWRMSTLLGNYVTPVPAQQRVGPRWFSGSADAIFQSLNLVYDEQPDYILVFGADHIYRMDPRQMLEEHIASGASVTVAAVRVPRKDAHAFGVIQPAASGPERGRRVARFLEKPADTEGLGLPDAPDEVFASMGNYCFTTAALLDAVIRDAADERSAHDMGGNIIPMFVERGDAAVYDFHTNQVPGSTPRDHAYWRDVGTLDAYYDAHQDLVSVHPIFNLYNQDWPIYTHHRPLPPAKIVHDGTSVVDSLLSDGVIVADARVSRSVLSPSVYVDRGAVIEGCVLLDNVHIGRGAVVRNAIIDKNVVVPDGAAIGVDPQRDAERFTVSEGGIVVIAKNAVVEP</sequence>
<keyword id="KW-0067">ATP-binding</keyword>
<keyword id="KW-0119">Carbohydrate metabolism</keyword>
<keyword id="KW-0320">Glycogen biosynthesis</keyword>
<keyword id="KW-0321">Glycogen metabolism</keyword>
<keyword id="KW-0547">Nucleotide-binding</keyword>
<keyword id="KW-0548">Nucleotidyltransferase</keyword>
<keyword id="KW-1185">Reference proteome</keyword>
<keyword id="KW-0808">Transferase</keyword>
<name>GLGC_ACIC1</name>
<organism>
    <name type="scientific">Acidothermus cellulolyticus (strain ATCC 43068 / DSM 8971 / 11B)</name>
    <dbReference type="NCBI Taxonomy" id="351607"/>
    <lineage>
        <taxon>Bacteria</taxon>
        <taxon>Bacillati</taxon>
        <taxon>Actinomycetota</taxon>
        <taxon>Actinomycetes</taxon>
        <taxon>Acidothermales</taxon>
        <taxon>Acidothermaceae</taxon>
        <taxon>Acidothermus</taxon>
    </lineage>
</organism>
<gene>
    <name evidence="1" type="primary">glgC</name>
    <name type="ordered locus">Acel_1821</name>
</gene>
<dbReference type="EC" id="2.7.7.27" evidence="1"/>
<dbReference type="EMBL" id="CP000481">
    <property type="protein sequence ID" value="ABK53593.1"/>
    <property type="molecule type" value="Genomic_DNA"/>
</dbReference>
<dbReference type="RefSeq" id="WP_011720656.1">
    <property type="nucleotide sequence ID" value="NC_008578.1"/>
</dbReference>
<dbReference type="SMR" id="A0LVY3"/>
<dbReference type="FunCoup" id="A0LVY3">
    <property type="interactions" value="100"/>
</dbReference>
<dbReference type="STRING" id="351607.Acel_1821"/>
<dbReference type="KEGG" id="ace:Acel_1821"/>
<dbReference type="eggNOG" id="COG0448">
    <property type="taxonomic scope" value="Bacteria"/>
</dbReference>
<dbReference type="HOGENOM" id="CLU_029499_14_1_11"/>
<dbReference type="InParanoid" id="A0LVY3"/>
<dbReference type="OrthoDB" id="9801810at2"/>
<dbReference type="UniPathway" id="UPA00164"/>
<dbReference type="Proteomes" id="UP000008221">
    <property type="component" value="Chromosome"/>
</dbReference>
<dbReference type="GO" id="GO:0005524">
    <property type="term" value="F:ATP binding"/>
    <property type="evidence" value="ECO:0007669"/>
    <property type="project" value="UniProtKB-KW"/>
</dbReference>
<dbReference type="GO" id="GO:0008878">
    <property type="term" value="F:glucose-1-phosphate adenylyltransferase activity"/>
    <property type="evidence" value="ECO:0007669"/>
    <property type="project" value="UniProtKB-UniRule"/>
</dbReference>
<dbReference type="GO" id="GO:0005978">
    <property type="term" value="P:glycogen biosynthetic process"/>
    <property type="evidence" value="ECO:0007669"/>
    <property type="project" value="UniProtKB-UniRule"/>
</dbReference>
<dbReference type="CDD" id="cd02508">
    <property type="entry name" value="ADP_Glucose_PP"/>
    <property type="match status" value="1"/>
</dbReference>
<dbReference type="CDD" id="cd04651">
    <property type="entry name" value="LbH_G1P_AT_C"/>
    <property type="match status" value="1"/>
</dbReference>
<dbReference type="Gene3D" id="2.160.10.10">
    <property type="entry name" value="Hexapeptide repeat proteins"/>
    <property type="match status" value="1"/>
</dbReference>
<dbReference type="Gene3D" id="3.90.550.10">
    <property type="entry name" value="Spore Coat Polysaccharide Biosynthesis Protein SpsA, Chain A"/>
    <property type="match status" value="1"/>
</dbReference>
<dbReference type="HAMAP" id="MF_00624">
    <property type="entry name" value="GlgC"/>
    <property type="match status" value="1"/>
</dbReference>
<dbReference type="InterPro" id="IPR011831">
    <property type="entry name" value="ADP-Glc_PPase"/>
</dbReference>
<dbReference type="InterPro" id="IPR005836">
    <property type="entry name" value="ADP_Glu_pyroP_CS"/>
</dbReference>
<dbReference type="InterPro" id="IPR023049">
    <property type="entry name" value="GlgC_bac"/>
</dbReference>
<dbReference type="InterPro" id="IPR056818">
    <property type="entry name" value="GlmU/GlgC-like_hexapep"/>
</dbReference>
<dbReference type="InterPro" id="IPR005835">
    <property type="entry name" value="NTP_transferase_dom"/>
</dbReference>
<dbReference type="InterPro" id="IPR029044">
    <property type="entry name" value="Nucleotide-diphossugar_trans"/>
</dbReference>
<dbReference type="InterPro" id="IPR011004">
    <property type="entry name" value="Trimer_LpxA-like_sf"/>
</dbReference>
<dbReference type="NCBIfam" id="TIGR02091">
    <property type="entry name" value="glgC"/>
    <property type="match status" value="1"/>
</dbReference>
<dbReference type="NCBIfam" id="NF001947">
    <property type="entry name" value="PRK00725.1"/>
    <property type="match status" value="1"/>
</dbReference>
<dbReference type="NCBIfam" id="NF002023">
    <property type="entry name" value="PRK00844.1"/>
    <property type="match status" value="1"/>
</dbReference>
<dbReference type="PANTHER" id="PTHR43523:SF2">
    <property type="entry name" value="GLUCOSE-1-PHOSPHATE ADENYLYLTRANSFERASE"/>
    <property type="match status" value="1"/>
</dbReference>
<dbReference type="PANTHER" id="PTHR43523">
    <property type="entry name" value="GLUCOSE-1-PHOSPHATE ADENYLYLTRANSFERASE-RELATED"/>
    <property type="match status" value="1"/>
</dbReference>
<dbReference type="Pfam" id="PF24894">
    <property type="entry name" value="Hexapep_GlmU"/>
    <property type="match status" value="1"/>
</dbReference>
<dbReference type="Pfam" id="PF00483">
    <property type="entry name" value="NTP_transferase"/>
    <property type="match status" value="1"/>
</dbReference>
<dbReference type="SUPFAM" id="SSF53448">
    <property type="entry name" value="Nucleotide-diphospho-sugar transferases"/>
    <property type="match status" value="1"/>
</dbReference>
<dbReference type="SUPFAM" id="SSF51161">
    <property type="entry name" value="Trimeric LpxA-like enzymes"/>
    <property type="match status" value="1"/>
</dbReference>
<dbReference type="PROSITE" id="PS00809">
    <property type="entry name" value="ADP_GLC_PYROPHOSPH_2"/>
    <property type="match status" value="1"/>
</dbReference>
<comment type="function">
    <text evidence="1">Involved in the biosynthesis of ADP-glucose, a building block required for the elongation reactions to produce glycogen. Catalyzes the reaction between ATP and alpha-D-glucose 1-phosphate (G1P) to produce pyrophosphate and ADP-Glc.</text>
</comment>
<comment type="catalytic activity">
    <reaction evidence="1">
        <text>alpha-D-glucose 1-phosphate + ATP + H(+) = ADP-alpha-D-glucose + diphosphate</text>
        <dbReference type="Rhea" id="RHEA:12120"/>
        <dbReference type="ChEBI" id="CHEBI:15378"/>
        <dbReference type="ChEBI" id="CHEBI:30616"/>
        <dbReference type="ChEBI" id="CHEBI:33019"/>
        <dbReference type="ChEBI" id="CHEBI:57498"/>
        <dbReference type="ChEBI" id="CHEBI:58601"/>
        <dbReference type="EC" id="2.7.7.27"/>
    </reaction>
</comment>
<comment type="pathway">
    <text evidence="1">Glycan biosynthesis; glycogen biosynthesis.</text>
</comment>
<comment type="subunit">
    <text evidence="1">Homotetramer.</text>
</comment>
<comment type="similarity">
    <text evidence="1">Belongs to the bacterial/plant glucose-1-phosphate adenylyltransferase family.</text>
</comment>